<gene>
    <name evidence="1" type="primary">pgk</name>
    <name type="ordered locus">MGAS2096_Spy1625</name>
</gene>
<protein>
    <recommendedName>
        <fullName evidence="1">Phosphoglycerate kinase</fullName>
        <ecNumber evidence="1">2.7.2.3</ecNumber>
    </recommendedName>
</protein>
<comment type="catalytic activity">
    <reaction evidence="1">
        <text>(2R)-3-phosphoglycerate + ATP = (2R)-3-phospho-glyceroyl phosphate + ADP</text>
        <dbReference type="Rhea" id="RHEA:14801"/>
        <dbReference type="ChEBI" id="CHEBI:30616"/>
        <dbReference type="ChEBI" id="CHEBI:57604"/>
        <dbReference type="ChEBI" id="CHEBI:58272"/>
        <dbReference type="ChEBI" id="CHEBI:456216"/>
        <dbReference type="EC" id="2.7.2.3"/>
    </reaction>
</comment>
<comment type="pathway">
    <text evidence="1">Carbohydrate degradation; glycolysis; pyruvate from D-glyceraldehyde 3-phosphate: step 2/5.</text>
</comment>
<comment type="subunit">
    <text evidence="1">Monomer.</text>
</comment>
<comment type="subcellular location">
    <subcellularLocation>
        <location evidence="1">Cytoplasm</location>
    </subcellularLocation>
</comment>
<comment type="similarity">
    <text evidence="1">Belongs to the phosphoglycerate kinase family.</text>
</comment>
<evidence type="ECO:0000255" key="1">
    <source>
        <dbReference type="HAMAP-Rule" id="MF_00145"/>
    </source>
</evidence>
<name>PGK_STRPB</name>
<reference key="1">
    <citation type="journal article" date="2006" name="Proc. Natl. Acad. Sci. U.S.A.">
        <title>Molecular genetic anatomy of inter- and intraserotype variation in the human bacterial pathogen group A Streptococcus.</title>
        <authorList>
            <person name="Beres S.B."/>
            <person name="Richter E.W."/>
            <person name="Nagiec M.J."/>
            <person name="Sumby P."/>
            <person name="Porcella S.F."/>
            <person name="DeLeo F.R."/>
            <person name="Musser J.M."/>
        </authorList>
    </citation>
    <scope>NUCLEOTIDE SEQUENCE [LARGE SCALE GENOMIC DNA]</scope>
    <source>
        <strain>MGAS2096</strain>
    </source>
</reference>
<accession>Q1J9Y4</accession>
<sequence length="398" mass="42130">MAKLTVKDVDLKGKKVLVRVDFNVPLKDGVITNDNRITAALPTIKYIIEQGGRAILFSHLGRVKEEADKEGKSLAPVAADLAAKLGQDVVFPGVTRGSKLEEAINALEDGQVLLVENTRFEDVDGKKESKNDEELGKYWASLGDGIFVNDAFGTAHRAHASNVGISANVEKAVAGFLLENEIAYIQEAVETPERPFVAILGGSKVSDKIGVIENLLEKADKVLIGGGMTYTFYKAQGIEIGNSLVEEDKLDVAKDLLEKSNGKLILPVDSKEANAFAGYTEVRDTEGEAVSEGFLGLDIGPKSIAEFDQALTGAKTVVWNGPMGVFENPDFQAGTIGVMDAIVKQPGVKSIIGGGDSAAAAINLGRADKFSWISTGGGASMELLEGKVLPGLAALTEK</sequence>
<dbReference type="EC" id="2.7.2.3" evidence="1"/>
<dbReference type="EMBL" id="CP000261">
    <property type="protein sequence ID" value="ABF36677.1"/>
    <property type="molecule type" value="Genomic_DNA"/>
</dbReference>
<dbReference type="SMR" id="Q1J9Y4"/>
<dbReference type="KEGG" id="spj:MGAS2096_Spy1625"/>
<dbReference type="HOGENOM" id="CLU_025427_0_1_9"/>
<dbReference type="UniPathway" id="UPA00109">
    <property type="reaction ID" value="UER00185"/>
</dbReference>
<dbReference type="GO" id="GO:0005829">
    <property type="term" value="C:cytosol"/>
    <property type="evidence" value="ECO:0007669"/>
    <property type="project" value="TreeGrafter"/>
</dbReference>
<dbReference type="GO" id="GO:0043531">
    <property type="term" value="F:ADP binding"/>
    <property type="evidence" value="ECO:0007669"/>
    <property type="project" value="TreeGrafter"/>
</dbReference>
<dbReference type="GO" id="GO:0005524">
    <property type="term" value="F:ATP binding"/>
    <property type="evidence" value="ECO:0007669"/>
    <property type="project" value="UniProtKB-KW"/>
</dbReference>
<dbReference type="GO" id="GO:0004618">
    <property type="term" value="F:phosphoglycerate kinase activity"/>
    <property type="evidence" value="ECO:0007669"/>
    <property type="project" value="UniProtKB-UniRule"/>
</dbReference>
<dbReference type="GO" id="GO:0006094">
    <property type="term" value="P:gluconeogenesis"/>
    <property type="evidence" value="ECO:0007669"/>
    <property type="project" value="TreeGrafter"/>
</dbReference>
<dbReference type="GO" id="GO:0006096">
    <property type="term" value="P:glycolytic process"/>
    <property type="evidence" value="ECO:0007669"/>
    <property type="project" value="UniProtKB-UniRule"/>
</dbReference>
<dbReference type="FunFam" id="3.40.50.1260:FF:000001">
    <property type="entry name" value="Phosphoglycerate kinase"/>
    <property type="match status" value="1"/>
</dbReference>
<dbReference type="FunFam" id="3.40.50.1260:FF:000008">
    <property type="entry name" value="Phosphoglycerate kinase"/>
    <property type="match status" value="1"/>
</dbReference>
<dbReference type="Gene3D" id="3.40.50.1260">
    <property type="entry name" value="Phosphoglycerate kinase, N-terminal domain"/>
    <property type="match status" value="2"/>
</dbReference>
<dbReference type="HAMAP" id="MF_00145">
    <property type="entry name" value="Phosphoglyc_kinase"/>
    <property type="match status" value="1"/>
</dbReference>
<dbReference type="InterPro" id="IPR001576">
    <property type="entry name" value="Phosphoglycerate_kinase"/>
</dbReference>
<dbReference type="InterPro" id="IPR015911">
    <property type="entry name" value="Phosphoglycerate_kinase_CS"/>
</dbReference>
<dbReference type="InterPro" id="IPR015824">
    <property type="entry name" value="Phosphoglycerate_kinase_N"/>
</dbReference>
<dbReference type="InterPro" id="IPR036043">
    <property type="entry name" value="Phosphoglycerate_kinase_sf"/>
</dbReference>
<dbReference type="PANTHER" id="PTHR11406">
    <property type="entry name" value="PHOSPHOGLYCERATE KINASE"/>
    <property type="match status" value="1"/>
</dbReference>
<dbReference type="PANTHER" id="PTHR11406:SF23">
    <property type="entry name" value="PHOSPHOGLYCERATE KINASE 1, CHLOROPLASTIC-RELATED"/>
    <property type="match status" value="1"/>
</dbReference>
<dbReference type="Pfam" id="PF00162">
    <property type="entry name" value="PGK"/>
    <property type="match status" value="1"/>
</dbReference>
<dbReference type="PIRSF" id="PIRSF000724">
    <property type="entry name" value="Pgk"/>
    <property type="match status" value="1"/>
</dbReference>
<dbReference type="PRINTS" id="PR00477">
    <property type="entry name" value="PHGLYCKINASE"/>
</dbReference>
<dbReference type="SUPFAM" id="SSF53748">
    <property type="entry name" value="Phosphoglycerate kinase"/>
    <property type="match status" value="1"/>
</dbReference>
<dbReference type="PROSITE" id="PS00111">
    <property type="entry name" value="PGLYCERATE_KINASE"/>
    <property type="match status" value="1"/>
</dbReference>
<organism>
    <name type="scientific">Streptococcus pyogenes serotype M12 (strain MGAS2096)</name>
    <dbReference type="NCBI Taxonomy" id="370553"/>
    <lineage>
        <taxon>Bacteria</taxon>
        <taxon>Bacillati</taxon>
        <taxon>Bacillota</taxon>
        <taxon>Bacilli</taxon>
        <taxon>Lactobacillales</taxon>
        <taxon>Streptococcaceae</taxon>
        <taxon>Streptococcus</taxon>
    </lineage>
</organism>
<feature type="chain" id="PRO_1000009655" description="Phosphoglycerate kinase">
    <location>
        <begin position="1"/>
        <end position="398"/>
    </location>
</feature>
<feature type="binding site" evidence="1">
    <location>
        <begin position="21"/>
        <end position="23"/>
    </location>
    <ligand>
        <name>substrate</name>
    </ligand>
</feature>
<feature type="binding site" evidence="1">
    <location>
        <position position="36"/>
    </location>
    <ligand>
        <name>substrate</name>
    </ligand>
</feature>
<feature type="binding site" evidence="1">
    <location>
        <begin position="59"/>
        <end position="62"/>
    </location>
    <ligand>
        <name>substrate</name>
    </ligand>
</feature>
<feature type="binding site" evidence="1">
    <location>
        <position position="119"/>
    </location>
    <ligand>
        <name>substrate</name>
    </ligand>
</feature>
<feature type="binding site" evidence="1">
    <location>
        <position position="157"/>
    </location>
    <ligand>
        <name>substrate</name>
    </ligand>
</feature>
<feature type="binding site" evidence="1">
    <location>
        <position position="208"/>
    </location>
    <ligand>
        <name>ATP</name>
        <dbReference type="ChEBI" id="CHEBI:30616"/>
    </ligand>
</feature>
<feature type="binding site" evidence="1">
    <location>
        <position position="296"/>
    </location>
    <ligand>
        <name>ATP</name>
        <dbReference type="ChEBI" id="CHEBI:30616"/>
    </ligand>
</feature>
<feature type="binding site" evidence="1">
    <location>
        <position position="327"/>
    </location>
    <ligand>
        <name>ATP</name>
        <dbReference type="ChEBI" id="CHEBI:30616"/>
    </ligand>
</feature>
<feature type="binding site" evidence="1">
    <location>
        <begin position="354"/>
        <end position="357"/>
    </location>
    <ligand>
        <name>ATP</name>
        <dbReference type="ChEBI" id="CHEBI:30616"/>
    </ligand>
</feature>
<proteinExistence type="inferred from homology"/>
<keyword id="KW-0067">ATP-binding</keyword>
<keyword id="KW-0963">Cytoplasm</keyword>
<keyword id="KW-0324">Glycolysis</keyword>
<keyword id="KW-0418">Kinase</keyword>
<keyword id="KW-0547">Nucleotide-binding</keyword>
<keyword id="KW-0808">Transferase</keyword>